<reference key="1">
    <citation type="journal article" date="2003" name="Lancet">
        <title>Genome sequence of Vibrio parahaemolyticus: a pathogenic mechanism distinct from that of V. cholerae.</title>
        <authorList>
            <person name="Makino K."/>
            <person name="Oshima K."/>
            <person name="Kurokawa K."/>
            <person name="Yokoyama K."/>
            <person name="Uda T."/>
            <person name="Tagomori K."/>
            <person name="Iijima Y."/>
            <person name="Najima M."/>
            <person name="Nakano M."/>
            <person name="Yamashita A."/>
            <person name="Kubota Y."/>
            <person name="Kimura S."/>
            <person name="Yasunaga T."/>
            <person name="Honda T."/>
            <person name="Shinagawa H."/>
            <person name="Hattori M."/>
            <person name="Iida T."/>
        </authorList>
    </citation>
    <scope>NUCLEOTIDE SEQUENCE [LARGE SCALE GENOMIC DNA]</scope>
    <source>
        <strain>RIMD 2210633</strain>
    </source>
</reference>
<dbReference type="EC" id="2.2.1.7" evidence="1"/>
<dbReference type="EMBL" id="BA000031">
    <property type="protein sequence ID" value="BAC58949.1"/>
    <property type="molecule type" value="Genomic_DNA"/>
</dbReference>
<dbReference type="RefSeq" id="NP_797065.1">
    <property type="nucleotide sequence ID" value="NC_004603.1"/>
</dbReference>
<dbReference type="RefSeq" id="WP_005483016.1">
    <property type="nucleotide sequence ID" value="NC_004603.1"/>
</dbReference>
<dbReference type="SMR" id="Q87RU0"/>
<dbReference type="GeneID" id="1188161"/>
<dbReference type="KEGG" id="vpa:VP0686"/>
<dbReference type="PATRIC" id="fig|223926.6.peg.654"/>
<dbReference type="eggNOG" id="COG1154">
    <property type="taxonomic scope" value="Bacteria"/>
</dbReference>
<dbReference type="HOGENOM" id="CLU_009227_1_4_6"/>
<dbReference type="UniPathway" id="UPA00064">
    <property type="reaction ID" value="UER00091"/>
</dbReference>
<dbReference type="Proteomes" id="UP000002493">
    <property type="component" value="Chromosome 1"/>
</dbReference>
<dbReference type="GO" id="GO:0005829">
    <property type="term" value="C:cytosol"/>
    <property type="evidence" value="ECO:0007669"/>
    <property type="project" value="TreeGrafter"/>
</dbReference>
<dbReference type="GO" id="GO:0008661">
    <property type="term" value="F:1-deoxy-D-xylulose-5-phosphate synthase activity"/>
    <property type="evidence" value="ECO:0007669"/>
    <property type="project" value="UniProtKB-UniRule"/>
</dbReference>
<dbReference type="GO" id="GO:0000287">
    <property type="term" value="F:magnesium ion binding"/>
    <property type="evidence" value="ECO:0007669"/>
    <property type="project" value="UniProtKB-UniRule"/>
</dbReference>
<dbReference type="GO" id="GO:0030976">
    <property type="term" value="F:thiamine pyrophosphate binding"/>
    <property type="evidence" value="ECO:0007669"/>
    <property type="project" value="UniProtKB-UniRule"/>
</dbReference>
<dbReference type="GO" id="GO:0052865">
    <property type="term" value="P:1-deoxy-D-xylulose 5-phosphate biosynthetic process"/>
    <property type="evidence" value="ECO:0007669"/>
    <property type="project" value="UniProtKB-UniPathway"/>
</dbReference>
<dbReference type="GO" id="GO:0019288">
    <property type="term" value="P:isopentenyl diphosphate biosynthetic process, methylerythritol 4-phosphate pathway"/>
    <property type="evidence" value="ECO:0007669"/>
    <property type="project" value="TreeGrafter"/>
</dbReference>
<dbReference type="GO" id="GO:0016114">
    <property type="term" value="P:terpenoid biosynthetic process"/>
    <property type="evidence" value="ECO:0007669"/>
    <property type="project" value="UniProtKB-UniRule"/>
</dbReference>
<dbReference type="GO" id="GO:0009228">
    <property type="term" value="P:thiamine biosynthetic process"/>
    <property type="evidence" value="ECO:0007669"/>
    <property type="project" value="UniProtKB-UniRule"/>
</dbReference>
<dbReference type="CDD" id="cd02007">
    <property type="entry name" value="TPP_DXS"/>
    <property type="match status" value="1"/>
</dbReference>
<dbReference type="CDD" id="cd07033">
    <property type="entry name" value="TPP_PYR_DXS_TK_like"/>
    <property type="match status" value="1"/>
</dbReference>
<dbReference type="FunFam" id="3.40.50.920:FF:000002">
    <property type="entry name" value="1-deoxy-D-xylulose-5-phosphate synthase"/>
    <property type="match status" value="1"/>
</dbReference>
<dbReference type="FunFam" id="3.40.50.970:FF:000005">
    <property type="entry name" value="1-deoxy-D-xylulose-5-phosphate synthase"/>
    <property type="match status" value="1"/>
</dbReference>
<dbReference type="Gene3D" id="3.40.50.920">
    <property type="match status" value="1"/>
</dbReference>
<dbReference type="Gene3D" id="3.40.50.970">
    <property type="match status" value="2"/>
</dbReference>
<dbReference type="HAMAP" id="MF_00315">
    <property type="entry name" value="DXP_synth"/>
    <property type="match status" value="1"/>
</dbReference>
<dbReference type="InterPro" id="IPR005477">
    <property type="entry name" value="Dxylulose-5-P_synthase"/>
</dbReference>
<dbReference type="InterPro" id="IPR029061">
    <property type="entry name" value="THDP-binding"/>
</dbReference>
<dbReference type="InterPro" id="IPR009014">
    <property type="entry name" value="Transketo_C/PFOR_II"/>
</dbReference>
<dbReference type="InterPro" id="IPR005475">
    <property type="entry name" value="Transketolase-like_Pyr-bd"/>
</dbReference>
<dbReference type="InterPro" id="IPR020826">
    <property type="entry name" value="Transketolase_BS"/>
</dbReference>
<dbReference type="InterPro" id="IPR033248">
    <property type="entry name" value="Transketolase_C"/>
</dbReference>
<dbReference type="InterPro" id="IPR049557">
    <property type="entry name" value="Transketolase_CS"/>
</dbReference>
<dbReference type="NCBIfam" id="TIGR00204">
    <property type="entry name" value="dxs"/>
    <property type="match status" value="1"/>
</dbReference>
<dbReference type="NCBIfam" id="NF003933">
    <property type="entry name" value="PRK05444.2-2"/>
    <property type="match status" value="1"/>
</dbReference>
<dbReference type="PANTHER" id="PTHR43322">
    <property type="entry name" value="1-D-DEOXYXYLULOSE 5-PHOSPHATE SYNTHASE-RELATED"/>
    <property type="match status" value="1"/>
</dbReference>
<dbReference type="PANTHER" id="PTHR43322:SF5">
    <property type="entry name" value="1-DEOXY-D-XYLULOSE-5-PHOSPHATE SYNTHASE, CHLOROPLASTIC"/>
    <property type="match status" value="1"/>
</dbReference>
<dbReference type="Pfam" id="PF13292">
    <property type="entry name" value="DXP_synthase_N"/>
    <property type="match status" value="1"/>
</dbReference>
<dbReference type="Pfam" id="PF02779">
    <property type="entry name" value="Transket_pyr"/>
    <property type="match status" value="1"/>
</dbReference>
<dbReference type="Pfam" id="PF02780">
    <property type="entry name" value="Transketolase_C"/>
    <property type="match status" value="1"/>
</dbReference>
<dbReference type="SMART" id="SM00861">
    <property type="entry name" value="Transket_pyr"/>
    <property type="match status" value="1"/>
</dbReference>
<dbReference type="SUPFAM" id="SSF52518">
    <property type="entry name" value="Thiamin diphosphate-binding fold (THDP-binding)"/>
    <property type="match status" value="2"/>
</dbReference>
<dbReference type="SUPFAM" id="SSF52922">
    <property type="entry name" value="TK C-terminal domain-like"/>
    <property type="match status" value="1"/>
</dbReference>
<dbReference type="PROSITE" id="PS00801">
    <property type="entry name" value="TRANSKETOLASE_1"/>
    <property type="match status" value="1"/>
</dbReference>
<dbReference type="PROSITE" id="PS00802">
    <property type="entry name" value="TRANSKETOLASE_2"/>
    <property type="match status" value="1"/>
</dbReference>
<name>DXS_VIBPA</name>
<sequence>MTLDISKYPTLALANTPEELRLLPKETLPTLCDELRTYLLNSVSQSSGHLASGLGTVELTVALHYVYNTPVDKLIWDVGHQAYPHKILTGRRDQMPTIRQKDGLHPFPWREESEYDTLSVGHSSTSISAGLGLAISAQKEGKGRKVISVIGDGAITAGMAFEAMNHAGDVHPDMLVILNDNEMSISENVGALNNHLAKVLSGSLYTSIREGGKKVLSGVPPIKELVRRTEEHLKGMVVPGTLFEEFGFNYIGPIDGHDVNELVKTLKNMRELKGPQFLHIMTKKGKGYEPAEKDPIGYHGVPKFDPSHNCLPKSSGGKPTFSKIFGDFLCDMAAQDPKLMAITPAMREGSGMVRFSKEFPDQYFDVAIAEQHAVTLATGMAIAGDHPIVAIYSTFLQRGYDQLIHDIAIMDLPVMFAIDRAGLVGADGQTHQGAFDLSFMRCIPNMVIMAPSDENECRQMLYTGHKHTGPSAVRYPRGSGMGTEIEKEFTALEIGKGRVVRKGEKVAILSFGTFLPNALEAAKNLNATVADMRFVKPLDEALIRQLADEHDVLVTLEENAIAGGAGAGVIEFMMKEKIIKPVLNLGLPDKFIHQGTQEELHEELGLDAKGIEKSIAEYLAK</sequence>
<protein>
    <recommendedName>
        <fullName evidence="1">1-deoxy-D-xylulose-5-phosphate synthase</fullName>
        <ecNumber evidence="1">2.2.1.7</ecNumber>
    </recommendedName>
    <alternativeName>
        <fullName evidence="1">1-deoxyxylulose-5-phosphate synthase</fullName>
        <shortName evidence="1">DXP synthase</shortName>
        <shortName evidence="1">DXPS</shortName>
    </alternativeName>
</protein>
<feature type="chain" id="PRO_0000189170" description="1-deoxy-D-xylulose-5-phosphate synthase">
    <location>
        <begin position="1"/>
        <end position="621"/>
    </location>
</feature>
<feature type="binding site" evidence="1">
    <location>
        <position position="80"/>
    </location>
    <ligand>
        <name>thiamine diphosphate</name>
        <dbReference type="ChEBI" id="CHEBI:58937"/>
    </ligand>
</feature>
<feature type="binding site" evidence="1">
    <location>
        <begin position="121"/>
        <end position="123"/>
    </location>
    <ligand>
        <name>thiamine diphosphate</name>
        <dbReference type="ChEBI" id="CHEBI:58937"/>
    </ligand>
</feature>
<feature type="binding site" evidence="1">
    <location>
        <position position="152"/>
    </location>
    <ligand>
        <name>Mg(2+)</name>
        <dbReference type="ChEBI" id="CHEBI:18420"/>
    </ligand>
</feature>
<feature type="binding site" evidence="1">
    <location>
        <begin position="153"/>
        <end position="154"/>
    </location>
    <ligand>
        <name>thiamine diphosphate</name>
        <dbReference type="ChEBI" id="CHEBI:58937"/>
    </ligand>
</feature>
<feature type="binding site" evidence="1">
    <location>
        <position position="181"/>
    </location>
    <ligand>
        <name>Mg(2+)</name>
        <dbReference type="ChEBI" id="CHEBI:18420"/>
    </ligand>
</feature>
<feature type="binding site" evidence="1">
    <location>
        <position position="181"/>
    </location>
    <ligand>
        <name>thiamine diphosphate</name>
        <dbReference type="ChEBI" id="CHEBI:58937"/>
    </ligand>
</feature>
<feature type="binding site" evidence="1">
    <location>
        <position position="288"/>
    </location>
    <ligand>
        <name>thiamine diphosphate</name>
        <dbReference type="ChEBI" id="CHEBI:58937"/>
    </ligand>
</feature>
<feature type="binding site" evidence="1">
    <location>
        <position position="370"/>
    </location>
    <ligand>
        <name>thiamine diphosphate</name>
        <dbReference type="ChEBI" id="CHEBI:58937"/>
    </ligand>
</feature>
<gene>
    <name evidence="1" type="primary">dxs</name>
    <name type="ordered locus">VP0686</name>
</gene>
<accession>Q87RU0</accession>
<organism>
    <name type="scientific">Vibrio parahaemolyticus serotype O3:K6 (strain RIMD 2210633)</name>
    <dbReference type="NCBI Taxonomy" id="223926"/>
    <lineage>
        <taxon>Bacteria</taxon>
        <taxon>Pseudomonadati</taxon>
        <taxon>Pseudomonadota</taxon>
        <taxon>Gammaproteobacteria</taxon>
        <taxon>Vibrionales</taxon>
        <taxon>Vibrionaceae</taxon>
        <taxon>Vibrio</taxon>
    </lineage>
</organism>
<proteinExistence type="inferred from homology"/>
<evidence type="ECO:0000255" key="1">
    <source>
        <dbReference type="HAMAP-Rule" id="MF_00315"/>
    </source>
</evidence>
<comment type="function">
    <text evidence="1">Catalyzes the acyloin condensation reaction between C atoms 2 and 3 of pyruvate and glyceraldehyde 3-phosphate to yield 1-deoxy-D-xylulose-5-phosphate (DXP).</text>
</comment>
<comment type="catalytic activity">
    <reaction evidence="1">
        <text>D-glyceraldehyde 3-phosphate + pyruvate + H(+) = 1-deoxy-D-xylulose 5-phosphate + CO2</text>
        <dbReference type="Rhea" id="RHEA:12605"/>
        <dbReference type="ChEBI" id="CHEBI:15361"/>
        <dbReference type="ChEBI" id="CHEBI:15378"/>
        <dbReference type="ChEBI" id="CHEBI:16526"/>
        <dbReference type="ChEBI" id="CHEBI:57792"/>
        <dbReference type="ChEBI" id="CHEBI:59776"/>
        <dbReference type="EC" id="2.2.1.7"/>
    </reaction>
</comment>
<comment type="cofactor">
    <cofactor evidence="1">
        <name>Mg(2+)</name>
        <dbReference type="ChEBI" id="CHEBI:18420"/>
    </cofactor>
    <text evidence="1">Binds 1 Mg(2+) ion per subunit.</text>
</comment>
<comment type="cofactor">
    <cofactor evidence="1">
        <name>thiamine diphosphate</name>
        <dbReference type="ChEBI" id="CHEBI:58937"/>
    </cofactor>
    <text evidence="1">Binds 1 thiamine pyrophosphate per subunit.</text>
</comment>
<comment type="pathway">
    <text evidence="1">Metabolic intermediate biosynthesis; 1-deoxy-D-xylulose 5-phosphate biosynthesis; 1-deoxy-D-xylulose 5-phosphate from D-glyceraldehyde 3-phosphate and pyruvate: step 1/1.</text>
</comment>
<comment type="subunit">
    <text evidence="1">Homodimer.</text>
</comment>
<comment type="similarity">
    <text evidence="1">Belongs to the transketolase family. DXPS subfamily.</text>
</comment>
<keyword id="KW-0414">Isoprene biosynthesis</keyword>
<keyword id="KW-0460">Magnesium</keyword>
<keyword id="KW-0479">Metal-binding</keyword>
<keyword id="KW-0784">Thiamine biosynthesis</keyword>
<keyword id="KW-0786">Thiamine pyrophosphate</keyword>
<keyword id="KW-0808">Transferase</keyword>